<keyword id="KW-0175">Coiled coil</keyword>
<keyword id="KW-0963">Cytoplasm</keyword>
<keyword id="KW-0507">mRNA processing</keyword>
<keyword id="KW-0508">mRNA splicing</keyword>
<keyword id="KW-0539">Nucleus</keyword>
<keyword id="KW-1185">Reference proteome</keyword>
<keyword id="KW-0747">Spliceosome</keyword>
<sequence>MSSNVGLSTPRGSGTSGYVQRNYAFMKPRNAGYGAPYPPVSGANANDSSRGFKQRQPDKQILEHDRRRAVEVKVMEERERLEEENERIEQEGKGKGEGEGKVLSEEEIEERCEALRARLLKEMEEEENRKGDAADGERDEGRERRGWKRGPRDRERDLPPRERRQFKTYQVHELAEAKIEESERFKKALGIREDTETGEISSGRKDYEPRKRDRERY</sequence>
<organism>
    <name type="scientific">Aspergillus fumigatus (strain ATCC MYA-4609 / CBS 101355 / FGSC A1100 / Af293)</name>
    <name type="common">Neosartorya fumigata</name>
    <dbReference type="NCBI Taxonomy" id="330879"/>
    <lineage>
        <taxon>Eukaryota</taxon>
        <taxon>Fungi</taxon>
        <taxon>Dikarya</taxon>
        <taxon>Ascomycota</taxon>
        <taxon>Pezizomycotina</taxon>
        <taxon>Eurotiomycetes</taxon>
        <taxon>Eurotiomycetidae</taxon>
        <taxon>Eurotiales</taxon>
        <taxon>Aspergillaceae</taxon>
        <taxon>Aspergillus</taxon>
        <taxon>Aspergillus subgen. Fumigati</taxon>
    </lineage>
</organism>
<name>CWC21_ASPFU</name>
<dbReference type="EMBL" id="AAHF01000012">
    <property type="protein sequence ID" value="EAL85608.1"/>
    <property type="molecule type" value="Genomic_DNA"/>
</dbReference>
<dbReference type="RefSeq" id="XP_747646.1">
    <property type="nucleotide sequence ID" value="XM_742553.1"/>
</dbReference>
<dbReference type="SMR" id="Q4WDD0"/>
<dbReference type="FunCoup" id="Q4WDD0">
    <property type="interactions" value="48"/>
</dbReference>
<dbReference type="STRING" id="330879.Q4WDD0"/>
<dbReference type="EnsemblFungi" id="EAL85608">
    <property type="protein sequence ID" value="EAL85608"/>
    <property type="gene ID" value="AFUA_6G04320"/>
</dbReference>
<dbReference type="GeneID" id="3505320"/>
<dbReference type="KEGG" id="afm:AFUA_6G04320"/>
<dbReference type="VEuPathDB" id="FungiDB:Afu6g04320"/>
<dbReference type="eggNOG" id="KOG1869">
    <property type="taxonomic scope" value="Eukaryota"/>
</dbReference>
<dbReference type="HOGENOM" id="CLU_067891_2_0_1"/>
<dbReference type="InParanoid" id="Q4WDD0"/>
<dbReference type="OMA" id="LAHMRPR"/>
<dbReference type="OrthoDB" id="10267305at2759"/>
<dbReference type="Proteomes" id="UP000002530">
    <property type="component" value="Chromosome 6"/>
</dbReference>
<dbReference type="GO" id="GO:0005737">
    <property type="term" value="C:cytoplasm"/>
    <property type="evidence" value="ECO:0007669"/>
    <property type="project" value="UniProtKB-SubCell"/>
</dbReference>
<dbReference type="GO" id="GO:0005681">
    <property type="term" value="C:spliceosomal complex"/>
    <property type="evidence" value="ECO:0007669"/>
    <property type="project" value="UniProtKB-KW"/>
</dbReference>
<dbReference type="GO" id="GO:0006397">
    <property type="term" value="P:mRNA processing"/>
    <property type="evidence" value="ECO:0007669"/>
    <property type="project" value="UniProtKB-KW"/>
</dbReference>
<dbReference type="GO" id="GO:0008380">
    <property type="term" value="P:RNA splicing"/>
    <property type="evidence" value="ECO:0007669"/>
    <property type="project" value="UniProtKB-KW"/>
</dbReference>
<dbReference type="InterPro" id="IPR051372">
    <property type="entry name" value="CWC21"/>
</dbReference>
<dbReference type="InterPro" id="IPR013170">
    <property type="entry name" value="mRNA_splic_Cwf21_dom"/>
</dbReference>
<dbReference type="PANTHER" id="PTHR36562">
    <property type="entry name" value="SERINE/ARGININE REPETITIVE MATRIX 2"/>
    <property type="match status" value="1"/>
</dbReference>
<dbReference type="PANTHER" id="PTHR36562:SF5">
    <property type="entry name" value="SERINE_ARGININE REPETITIVE MATRIX 2"/>
    <property type="match status" value="1"/>
</dbReference>
<dbReference type="Pfam" id="PF08312">
    <property type="entry name" value="cwf21"/>
    <property type="match status" value="1"/>
</dbReference>
<dbReference type="SMART" id="SM01115">
    <property type="entry name" value="cwf21"/>
    <property type="match status" value="1"/>
</dbReference>
<proteinExistence type="inferred from homology"/>
<feature type="chain" id="PRO_0000123494" description="Pre-mRNA-splicing factor cwc21">
    <location>
        <begin position="1"/>
        <end position="217"/>
    </location>
</feature>
<feature type="domain" description="CWF21" evidence="2">
    <location>
        <begin position="62"/>
        <end position="122"/>
    </location>
</feature>
<feature type="region of interest" description="Disordered" evidence="3">
    <location>
        <begin position="30"/>
        <end position="108"/>
    </location>
</feature>
<feature type="region of interest" description="Disordered" evidence="3">
    <location>
        <begin position="122"/>
        <end position="217"/>
    </location>
</feature>
<feature type="coiled-coil region" evidence="2">
    <location>
        <begin position="65"/>
        <end position="135"/>
    </location>
</feature>
<feature type="compositionally biased region" description="Basic and acidic residues" evidence="3">
    <location>
        <begin position="55"/>
        <end position="104"/>
    </location>
</feature>
<feature type="compositionally biased region" description="Basic and acidic residues" evidence="3">
    <location>
        <begin position="122"/>
        <end position="165"/>
    </location>
</feature>
<feature type="compositionally biased region" description="Basic and acidic residues" evidence="3">
    <location>
        <begin position="173"/>
        <end position="195"/>
    </location>
</feature>
<feature type="compositionally biased region" description="Basic and acidic residues" evidence="3">
    <location>
        <begin position="202"/>
        <end position="217"/>
    </location>
</feature>
<reference key="1">
    <citation type="journal article" date="2005" name="Nature">
        <title>Genomic sequence of the pathogenic and allergenic filamentous fungus Aspergillus fumigatus.</title>
        <authorList>
            <person name="Nierman W.C."/>
            <person name="Pain A."/>
            <person name="Anderson M.J."/>
            <person name="Wortman J.R."/>
            <person name="Kim H.S."/>
            <person name="Arroyo J."/>
            <person name="Berriman M."/>
            <person name="Abe K."/>
            <person name="Archer D.B."/>
            <person name="Bermejo C."/>
            <person name="Bennett J.W."/>
            <person name="Bowyer P."/>
            <person name="Chen D."/>
            <person name="Collins M."/>
            <person name="Coulsen R."/>
            <person name="Davies R."/>
            <person name="Dyer P.S."/>
            <person name="Farman M.L."/>
            <person name="Fedorova N."/>
            <person name="Fedorova N.D."/>
            <person name="Feldblyum T.V."/>
            <person name="Fischer R."/>
            <person name="Fosker N."/>
            <person name="Fraser A."/>
            <person name="Garcia J.L."/>
            <person name="Garcia M.J."/>
            <person name="Goble A."/>
            <person name="Goldman G.H."/>
            <person name="Gomi K."/>
            <person name="Griffith-Jones S."/>
            <person name="Gwilliam R."/>
            <person name="Haas B.J."/>
            <person name="Haas H."/>
            <person name="Harris D.E."/>
            <person name="Horiuchi H."/>
            <person name="Huang J."/>
            <person name="Humphray S."/>
            <person name="Jimenez J."/>
            <person name="Keller N."/>
            <person name="Khouri H."/>
            <person name="Kitamoto K."/>
            <person name="Kobayashi T."/>
            <person name="Konzack S."/>
            <person name="Kulkarni R."/>
            <person name="Kumagai T."/>
            <person name="Lafton A."/>
            <person name="Latge J.-P."/>
            <person name="Li W."/>
            <person name="Lord A."/>
            <person name="Lu C."/>
            <person name="Majoros W.H."/>
            <person name="May G.S."/>
            <person name="Miller B.L."/>
            <person name="Mohamoud Y."/>
            <person name="Molina M."/>
            <person name="Monod M."/>
            <person name="Mouyna I."/>
            <person name="Mulligan S."/>
            <person name="Murphy L.D."/>
            <person name="O'Neil S."/>
            <person name="Paulsen I."/>
            <person name="Penalva M.A."/>
            <person name="Pertea M."/>
            <person name="Price C."/>
            <person name="Pritchard B.L."/>
            <person name="Quail M.A."/>
            <person name="Rabbinowitsch E."/>
            <person name="Rawlins N."/>
            <person name="Rajandream M.A."/>
            <person name="Reichard U."/>
            <person name="Renauld H."/>
            <person name="Robson G.D."/>
            <person name="Rodriguez de Cordoba S."/>
            <person name="Rodriguez-Pena J.M."/>
            <person name="Ronning C.M."/>
            <person name="Rutter S."/>
            <person name="Salzberg S.L."/>
            <person name="Sanchez M."/>
            <person name="Sanchez-Ferrero J.C."/>
            <person name="Saunders D."/>
            <person name="Seeger K."/>
            <person name="Squares R."/>
            <person name="Squares S."/>
            <person name="Takeuchi M."/>
            <person name="Tekaia F."/>
            <person name="Turner G."/>
            <person name="Vazquez de Aldana C.R."/>
            <person name="Weidman J."/>
            <person name="White O."/>
            <person name="Woodward J.R."/>
            <person name="Yu J.-H."/>
            <person name="Fraser C.M."/>
            <person name="Galagan J.E."/>
            <person name="Asai K."/>
            <person name="Machida M."/>
            <person name="Hall N."/>
            <person name="Barrell B.G."/>
            <person name="Denning D.W."/>
        </authorList>
    </citation>
    <scope>NUCLEOTIDE SEQUENCE [LARGE SCALE GENOMIC DNA]</scope>
    <source>
        <strain>ATCC MYA-4609 / CBS 101355 / FGSC A1100 / Af293</strain>
    </source>
</reference>
<evidence type="ECO:0000250" key="1"/>
<evidence type="ECO:0000255" key="2"/>
<evidence type="ECO:0000256" key="3">
    <source>
        <dbReference type="SAM" id="MobiDB-lite"/>
    </source>
</evidence>
<evidence type="ECO:0000305" key="4"/>
<comment type="function">
    <text evidence="1">Involved in pre-mRNA splicing. May function at or prior to the first catalytic step of splicing at the catalytic center of the spliceosome. May do so by stabilizing the catalytic center or the position of the RNA substrate (By similarity).</text>
</comment>
<comment type="subunit">
    <text evidence="1">Associates with the NTC complex (or PRP19-associated complex). The NTC complex associates with the spliceosome after the release of the U1 and U4 snRNAs and forms the CWC spliceosome subcomplex reminiscent of a late-stage spliceosome.</text>
</comment>
<comment type="subcellular location">
    <subcellularLocation>
        <location evidence="1">Cytoplasm</location>
    </subcellularLocation>
    <subcellularLocation>
        <location evidence="1">Nucleus</location>
    </subcellularLocation>
</comment>
<comment type="similarity">
    <text evidence="4">Belongs to the CWC21 family.</text>
</comment>
<accession>Q4WDD0</accession>
<protein>
    <recommendedName>
        <fullName>Pre-mRNA-splicing factor cwc21</fullName>
    </recommendedName>
</protein>
<gene>
    <name type="primary">cwc21</name>
    <name type="ORF">AFUA_6G04320</name>
</gene>